<name>PIT_PLAFA</name>
<organism evidence="6">
    <name type="scientific">Plasmodium falciparum</name>
    <dbReference type="NCBI Taxonomy" id="5833"/>
    <lineage>
        <taxon>Eukaryota</taxon>
        <taxon>Sar</taxon>
        <taxon>Alveolata</taxon>
        <taxon>Apicomplexa</taxon>
        <taxon>Aconoidasida</taxon>
        <taxon>Haemosporida</taxon>
        <taxon>Plasmodiidae</taxon>
        <taxon>Plasmodium</taxon>
        <taxon>Plasmodium (Laverania)</taxon>
    </lineage>
</organism>
<accession>Q7YUD6</accession>
<protein>
    <recommendedName>
        <fullName evidence="5">Sodium-dependent phosphate transporter</fullName>
        <shortName evidence="4">PfPiT</shortName>
    </recommendedName>
</protein>
<comment type="function">
    <text evidence="3">Sodium-phosphate symporter which preferentially transports the monovalent form of phosphate with a stoichiometry of two sodium ions per phosphate ion.</text>
</comment>
<comment type="catalytic activity">
    <reaction evidence="3">
        <text>2 Na(+)(out) + phosphate(out) = 2 Na(+)(in) + phosphate(in)</text>
        <dbReference type="Rhea" id="RHEA:71259"/>
        <dbReference type="ChEBI" id="CHEBI:29101"/>
        <dbReference type="ChEBI" id="CHEBI:43474"/>
    </reaction>
    <physiologicalReaction direction="left-to-right" evidence="5">
        <dbReference type="Rhea" id="RHEA:71260"/>
    </physiologicalReaction>
</comment>
<comment type="biophysicochemical properties">
    <kinetics>
        <KM evidence="3">30 uM for phosphate (at pH 6.3)</KM>
        <KM evidence="3">118 uM for phosphate (at pH 7.3)</KM>
        <KM evidence="3">621 uM for phosphate (at pH 8.3)</KM>
        <KM evidence="3">23 uM for dihydrogen phosphate (at pH 6.3)</KM>
        <KM evidence="3">28 uM for dihydrogen phosphate (at pH 7.3)</KM>
        <KM evidence="3">19 uM for dihydrogen phosphate (at pH 8.3)</KM>
        <KM evidence="3">7 uM for hydrogen phosphate (at pH 6.3)</KM>
        <KM evidence="3">90 uM for hydrogen phosphate (at pH 7.3)</KM>
        <KM evidence="3">601 uM for hydrogen phosphate (at pH 8.3)</KM>
        <KM evidence="3">445 uM for phosphate (in the presence of 5 mM of Na(+), at pH 7.4)</KM>
        <KM evidence="3">258 uM for phosphate (in the presence of 15 mM of Na(+), at pH 7.4)</KM>
        <KM evidence="3">106 uM for phosphate (in the presence of 100 mM of Na(+), at pH 7.4)</KM>
    </kinetics>
</comment>
<comment type="subcellular location">
    <subcellularLocation>
        <location evidence="3">Cell membrane</location>
        <topology evidence="1">Multi-pass membrane protein</topology>
    </subcellularLocation>
</comment>
<comment type="similarity">
    <text evidence="5">Belongs to the inorganic phosphate transporter (PiT) (TC 2.A.20) family.</text>
</comment>
<proteinExistence type="evidence at protein level"/>
<gene>
    <name evidence="5" type="primary">PiT</name>
</gene>
<evidence type="ECO:0000255" key="1"/>
<evidence type="ECO:0000256" key="2">
    <source>
        <dbReference type="SAM" id="MobiDB-lite"/>
    </source>
</evidence>
<evidence type="ECO:0000269" key="3">
    <source>
    </source>
</evidence>
<evidence type="ECO:0000303" key="4">
    <source>
    </source>
</evidence>
<evidence type="ECO:0000305" key="5"/>
<evidence type="ECO:0000312" key="6">
    <source>
        <dbReference type="EMBL" id="CAE30463.1"/>
    </source>
</evidence>
<feature type="chain" id="PRO_0000459732" description="Sodium-dependent phosphate transporter">
    <location>
        <begin position="1"/>
        <end position="669"/>
    </location>
</feature>
<feature type="topological domain" description="Extracellular" evidence="5">
    <location>
        <begin position="1"/>
        <end position="6"/>
    </location>
</feature>
<feature type="transmembrane region" description="Helical" evidence="1">
    <location>
        <begin position="7"/>
        <end position="27"/>
    </location>
</feature>
<feature type="topological domain" description="Cytoplasmic" evidence="5">
    <location>
        <begin position="28"/>
        <end position="47"/>
    </location>
</feature>
<feature type="transmembrane region" description="Helical" evidence="1">
    <location>
        <begin position="48"/>
        <end position="68"/>
    </location>
</feature>
<feature type="topological domain" description="Extracellular" evidence="5">
    <location>
        <begin position="69"/>
        <end position="86"/>
    </location>
</feature>
<feature type="transmembrane region" description="Helical" evidence="1">
    <location>
        <begin position="87"/>
        <end position="107"/>
    </location>
</feature>
<feature type="topological domain" description="Cytoplasmic" evidence="5">
    <location>
        <position position="108"/>
    </location>
</feature>
<feature type="transmembrane region" description="Helical" evidence="1">
    <location>
        <begin position="109"/>
        <end position="129"/>
    </location>
</feature>
<feature type="topological domain" description="Extracellular" evidence="5">
    <location>
        <begin position="130"/>
        <end position="143"/>
    </location>
</feature>
<feature type="transmembrane region" description="Helical" evidence="1">
    <location>
        <begin position="144"/>
        <end position="164"/>
    </location>
</feature>
<feature type="topological domain" description="Cytoplasmic" evidence="5">
    <location>
        <begin position="165"/>
        <end position="186"/>
    </location>
</feature>
<feature type="transmembrane region" description="Helical" evidence="1">
    <location>
        <begin position="187"/>
        <end position="207"/>
    </location>
</feature>
<feature type="topological domain" description="Extracellular" evidence="5">
    <location>
        <begin position="208"/>
        <end position="239"/>
    </location>
</feature>
<feature type="transmembrane region" description="Helical" evidence="1">
    <location>
        <begin position="240"/>
        <end position="260"/>
    </location>
</feature>
<feature type="topological domain" description="Cytoplasmic" evidence="5">
    <location>
        <begin position="261"/>
        <end position="502"/>
    </location>
</feature>
<feature type="transmembrane region" description="Helical" evidence="1">
    <location>
        <begin position="503"/>
        <end position="523"/>
    </location>
</feature>
<feature type="topological domain" description="Extracellular" evidence="5">
    <location>
        <begin position="524"/>
        <end position="542"/>
    </location>
</feature>
<feature type="transmembrane region" description="Helical" evidence="1">
    <location>
        <begin position="543"/>
        <end position="563"/>
    </location>
</feature>
<feature type="topological domain" description="Cytoplasmic" evidence="5">
    <location>
        <begin position="564"/>
        <end position="632"/>
    </location>
</feature>
<feature type="transmembrane region" description="Helical" evidence="1">
    <location>
        <begin position="633"/>
        <end position="653"/>
    </location>
</feature>
<feature type="topological domain" description="Extracellular" evidence="5">
    <location>
        <begin position="654"/>
        <end position="669"/>
    </location>
</feature>
<feature type="region of interest" description="Disordered" evidence="2">
    <location>
        <begin position="311"/>
        <end position="364"/>
    </location>
</feature>
<feature type="region of interest" description="Disordered" evidence="2">
    <location>
        <begin position="392"/>
        <end position="444"/>
    </location>
</feature>
<feature type="compositionally biased region" description="Polar residues" evidence="2">
    <location>
        <begin position="311"/>
        <end position="335"/>
    </location>
</feature>
<feature type="compositionally biased region" description="Basic and acidic residues" evidence="2">
    <location>
        <begin position="342"/>
        <end position="352"/>
    </location>
</feature>
<feature type="compositionally biased region" description="Low complexity" evidence="2">
    <location>
        <begin position="395"/>
        <end position="433"/>
    </location>
</feature>
<keyword id="KW-1003">Cell membrane</keyword>
<keyword id="KW-0472">Membrane</keyword>
<keyword id="KW-0592">Phosphate transport</keyword>
<keyword id="KW-0769">Symport</keyword>
<keyword id="KW-0812">Transmembrane</keyword>
<keyword id="KW-1133">Transmembrane helix</keyword>
<keyword id="KW-0813">Transport</keyword>
<dbReference type="EMBL" id="AJ580003">
    <property type="protein sequence ID" value="CAE30463.1"/>
    <property type="molecule type" value="mRNA"/>
</dbReference>
<dbReference type="SMR" id="Q7YUD6"/>
<dbReference type="TCDB" id="2.A.20.2.5">
    <property type="family name" value="the inorganic phosphate transporter (pit) family"/>
</dbReference>
<dbReference type="VEuPathDB" id="PlasmoDB:PF3D7_1340900"/>
<dbReference type="VEuPathDB" id="PlasmoDB:Pf7G8-2_000443500"/>
<dbReference type="VEuPathDB" id="PlasmoDB:Pf7G8_130045300"/>
<dbReference type="VEuPathDB" id="PlasmoDB:PfCD01_130046500"/>
<dbReference type="VEuPathDB" id="PlasmoDB:PfDd2_130046700"/>
<dbReference type="VEuPathDB" id="PlasmoDB:PfGA01_130047000"/>
<dbReference type="VEuPathDB" id="PlasmoDB:PfGB4_130046800"/>
<dbReference type="VEuPathDB" id="PlasmoDB:PfGN01_130047600"/>
<dbReference type="VEuPathDB" id="PlasmoDB:PfHB3_130047200"/>
<dbReference type="VEuPathDB" id="PlasmoDB:PfIT_130046200"/>
<dbReference type="VEuPathDB" id="PlasmoDB:PfKE01_130046500"/>
<dbReference type="VEuPathDB" id="PlasmoDB:PfKH01_130044900"/>
<dbReference type="VEuPathDB" id="PlasmoDB:PfKH02_130043800"/>
<dbReference type="VEuPathDB" id="PlasmoDB:PfML01_130044800"/>
<dbReference type="VEuPathDB" id="PlasmoDB:PfNF135_130045400"/>
<dbReference type="VEuPathDB" id="PlasmoDB:PfNF166_130046000"/>
<dbReference type="VEuPathDB" id="PlasmoDB:PfNF54_130045700"/>
<dbReference type="VEuPathDB" id="PlasmoDB:PfSD01_130047600"/>
<dbReference type="VEuPathDB" id="PlasmoDB:PfSN01_130043900"/>
<dbReference type="VEuPathDB" id="PlasmoDB:PfTG01_130046600"/>
<dbReference type="GO" id="GO:0005886">
    <property type="term" value="C:plasma membrane"/>
    <property type="evidence" value="ECO:0007669"/>
    <property type="project" value="UniProtKB-SubCell"/>
</dbReference>
<dbReference type="GO" id="GO:0005315">
    <property type="term" value="F:phosphate transmembrane transporter activity"/>
    <property type="evidence" value="ECO:0007669"/>
    <property type="project" value="InterPro"/>
</dbReference>
<dbReference type="GO" id="GO:0015293">
    <property type="term" value="F:symporter activity"/>
    <property type="evidence" value="ECO:0007669"/>
    <property type="project" value="UniProtKB-KW"/>
</dbReference>
<dbReference type="GO" id="GO:0035435">
    <property type="term" value="P:phosphate ion transmembrane transport"/>
    <property type="evidence" value="ECO:0007669"/>
    <property type="project" value="TreeGrafter"/>
</dbReference>
<dbReference type="InterPro" id="IPR001204">
    <property type="entry name" value="Phos_transporter"/>
</dbReference>
<dbReference type="PANTHER" id="PTHR11101">
    <property type="entry name" value="PHOSPHATE TRANSPORTER"/>
    <property type="match status" value="1"/>
</dbReference>
<dbReference type="PANTHER" id="PTHR11101:SF80">
    <property type="entry name" value="PHOSPHATE TRANSPORTER"/>
    <property type="match status" value="1"/>
</dbReference>
<dbReference type="Pfam" id="PF01384">
    <property type="entry name" value="PHO4"/>
    <property type="match status" value="1"/>
</dbReference>
<sequence length="669" mass="73306">MVTGPDMLWLVITSGIACFFMAFVTGANDIANTFSTSIGSKAISIKKALIVAFFFEALGASLLGGTVTDSIRSKIINFQVFYDTPEFLMLGMCCALMGATVWLAVATRAGLPVSTTHSIIGALLGFGLATGNMKSIKWEKINNIVISWLAAPILAGTCSAIAFTVLRMLILRKKNSFEIIKKMYWFLIFLITLPFSVFLIFHNPIVINTQCKMKKDGKVIVSSPCYIEDWSAAHSFYASIICILLSSLLTAIGSFVIYIIYNKRINNYNLKKKIFCEELADIEKNPQNNFCAINNSSLNSVASNETQLTQAHNNTSNGTKQNQVGNGTKSNNNNVLVLPGDKNVKSQQDDSKTNGTQKTGSVEAYHVVHIKDNGSEDKSHENMLKKNLDKVTNMNENNNNSNKNNNSNKNNNSNKNNNSNKNNNSNNGNSNEGNGKGGDPKNMENVIIENFDPQTEIVFSSLQIISAILGVVAQSANDTANAIGPFAAVFNTYNNGIRGKIKVQWYILLFGGLSMSLGLSIMGYRVIKTVGMKLIKITPARGFTIELISGLVVLFFSICGIPLSSTHCAVSSVIGLGLVEAKMNADNKRHARKSMDKDIIQVDKDKSFTLTEKIKYPFSFLNTSCVNLRLFRTVFLSWILTVVFSATVTAGIYSFAAYSPSYIMKMQTV</sequence>
<reference evidence="5" key="1">
    <citation type="journal article" date="2006" name="Nature">
        <title>Sodium-dependent uptake of inorganic phosphate by the intracellular malaria parasite.</title>
        <authorList>
            <person name="Saliba K.J."/>
            <person name="Martin R.E."/>
            <person name="Broeer A."/>
            <person name="Henry R.I."/>
            <person name="McCarthy C.S."/>
            <person name="Downie M.J."/>
            <person name="Allen R.J."/>
            <person name="Mullin K.A."/>
            <person name="McFadden G.I."/>
            <person name="Broeer S."/>
            <person name="Kirk K."/>
        </authorList>
    </citation>
    <scope>NUCLEOTIDE SEQUENCE [MRNA]</scope>
    <scope>FUNCTION</scope>
    <scope>TRANSPORTER ACTIVITY</scope>
    <scope>BIOPHYSICOCHEMICAL PROPERTIES</scope>
    <scope>SUBCELLULAR LOCATION</scope>
    <source>
        <strain evidence="4">FAF-6</strain>
    </source>
</reference>